<reference key="1">
    <citation type="journal article" date="1994" name="Eur. J. Biochem.">
        <title>DNA replication in vitro by recombinant DNA-polymerase-alpha-primase.</title>
        <authorList>
            <person name="Stadlbauer F."/>
            <person name="Brueckner A."/>
            <person name="Rehfuess C."/>
            <person name="Eckerskorn C."/>
            <person name="Lottspeich F."/>
            <person name="Foerster V."/>
            <person name="Tseng B.Y."/>
            <person name="Nasheuer H.-P."/>
        </authorList>
    </citation>
    <scope>NUCLEOTIDE SEQUENCE [MRNA]</scope>
</reference>
<reference key="2">
    <citation type="journal article" date="2004" name="Genome Res.">
        <title>The status, quality, and expansion of the NIH full-length cDNA project: the Mammalian Gene Collection (MGC).</title>
        <authorList>
            <consortium name="The MGC Project Team"/>
        </authorList>
    </citation>
    <scope>NUCLEOTIDE SEQUENCE [LARGE SCALE MRNA]</scope>
    <source>
        <tissue>Bone marrow</tissue>
    </source>
</reference>
<reference key="3">
    <citation type="journal article" date="1997" name="Genomics">
        <title>Mapping of the human DNA primase 1 (PRIM1) to chromosome 12q13.</title>
        <authorList>
            <person name="Cloutier S."/>
            <person name="Hamel H."/>
            <person name="Champagne M."/>
            <person name="Yotov W.V."/>
        </authorList>
    </citation>
    <scope>NUCLEOTIDE SEQUENCE [GENOMIC DNA / MRNA] OF 97-146</scope>
</reference>
<reference key="4">
    <citation type="journal article" date="1998" name="J. Biol. Chem.">
        <title>Primase activity of human DNA polymerase alpha-primase. Divalent cations stabilize the enzyme activity of the p48 subunit.</title>
        <authorList>
            <person name="Schneider A."/>
            <person name="Smith R.W."/>
            <person name="Kautz A.R."/>
            <person name="Weisshart K."/>
            <person name="Grosse F."/>
            <person name="Nasheuer H.P."/>
        </authorList>
    </citation>
    <scope>FUNCTION</scope>
    <scope>CATALYTIC ACTIVITY</scope>
    <scope>COFACTOR</scope>
    <scope>IDENTIFICATION IN THE DNA POLYMERASE ALPHA COMPLEX</scope>
</reference>
<reference key="5">
    <citation type="journal article" date="2007" name="J. Biol. Chem.">
        <title>An iron-sulfur cluster in the C-terminal domain of the p58 subunit of human DNA primase.</title>
        <authorList>
            <person name="Weiner B.E."/>
            <person name="Huang H."/>
            <person name="Dattilo B.M."/>
            <person name="Nilges M.J."/>
            <person name="Fanning E."/>
            <person name="Chazin W.J."/>
        </authorList>
    </citation>
    <scope>FUNCTION</scope>
    <scope>CATALYTIC ACTIVITY</scope>
    <scope>INTERACTION WITH PRIM2</scope>
    <scope>IDENTIFICATION IN DNA PRIMASE COMPLEX</scope>
</reference>
<reference key="6">
    <citation type="journal article" date="2011" name="BMC Syst. Biol.">
        <title>Initial characterization of the human central proteome.</title>
        <authorList>
            <person name="Burkard T.R."/>
            <person name="Planyavsky M."/>
            <person name="Kaupe I."/>
            <person name="Breitwieser F.P."/>
            <person name="Buerckstuemmer T."/>
            <person name="Bennett K.L."/>
            <person name="Superti-Furga G."/>
            <person name="Colinge J."/>
        </authorList>
    </citation>
    <scope>IDENTIFICATION BY MASS SPECTROMETRY [LARGE SCALE ANALYSIS]</scope>
</reference>
<reference key="7">
    <citation type="journal article" date="2012" name="Mol. Cell. Proteomics">
        <title>Comparative large-scale characterisation of plant vs. mammal proteins reveals similar and idiosyncratic N-alpha acetylation features.</title>
        <authorList>
            <person name="Bienvenut W.V."/>
            <person name="Sumpton D."/>
            <person name="Martinez A."/>
            <person name="Lilla S."/>
            <person name="Espagne C."/>
            <person name="Meinnel T."/>
            <person name="Giglione C."/>
        </authorList>
    </citation>
    <scope>ACETYLATION [LARGE SCALE ANALYSIS] AT MET-1</scope>
    <scope>IDENTIFICATION BY MASS SPECTROMETRY [LARGE SCALE ANALYSIS]</scope>
</reference>
<reference key="8">
    <citation type="journal article" date="2013" name="J. Proteome Res.">
        <title>Toward a comprehensive characterization of a human cancer cell phosphoproteome.</title>
        <authorList>
            <person name="Zhou H."/>
            <person name="Di Palma S."/>
            <person name="Preisinger C."/>
            <person name="Peng M."/>
            <person name="Polat A.N."/>
            <person name="Heck A.J."/>
            <person name="Mohammed S."/>
        </authorList>
    </citation>
    <scope>IDENTIFICATION BY MASS SPECTROMETRY [LARGE SCALE ANALYSIS]</scope>
    <source>
        <tissue>Erythroleukemia</tissue>
    </source>
</reference>
<reference evidence="16 17 18" key="9">
    <citation type="journal article" date="2013" name="Proc. Natl. Acad. Sci. U.S.A.">
        <title>Structures of human primase reveal design of nucleotide elongation site and mode of Pol alpha tethering.</title>
        <authorList>
            <person name="Kilkenny M.L."/>
            <person name="Longo M.A."/>
            <person name="Perera R.L."/>
            <person name="Pellegrini L."/>
        </authorList>
    </citation>
    <scope>X-RAY CRYSTALLOGRAPHY (2.70 ANGSTROMS) IN COMPLEX WITH UTP; ZINC AND MAGNESIUM</scope>
    <scope>FUNCTION</scope>
    <scope>CATALYTIC ACTIVITY</scope>
    <scope>SUBUNIT</scope>
    <scope>DOMAIN</scope>
    <scope>MUTAGENESIS OF GLU-44; TYR-54; ARG-56; LYS-77; ASP-109; ASP-111; ASP-114; ASP-116; HIS-166; ASP-306; HIS-315; LYS-318 AND HIS-324</scope>
</reference>
<reference evidence="19 20" key="10">
    <citation type="journal article" date="2014" name="J. Mol. Biol.">
        <title>Insights into eukaryotic primer synthesis from structures of the p48 subunit of human DNA primase.</title>
        <authorList>
            <person name="Vaithiyalingam S."/>
            <person name="Arnett D.R."/>
            <person name="Aggarwal A."/>
            <person name="Eichman B.F."/>
            <person name="Fanning E."/>
            <person name="Chazin W.J."/>
        </authorList>
    </citation>
    <scope>X-RAY CRYSTALLOGRAPHY (1.70 ANGSTROMS) OF 1-408 IN COMPLEX WITH NTP AND ZINC</scope>
    <scope>DOMAIN</scope>
    <scope>COFACTOR</scope>
    <scope>MUTAGENESIS OF ASP-109; ASP-111; SER-160; ARG-163; HIS-166; ASP-306; HIS-315 AND LYS-318</scope>
</reference>
<reference evidence="21" key="11">
    <citation type="journal article" date="2015" name="J. Biol. Chem.">
        <title>Crystal structure of the human primase.</title>
        <authorList>
            <person name="Baranovskiy A.G."/>
            <person name="Zhang Y."/>
            <person name="Suwa Y."/>
            <person name="Babayeva N.D."/>
            <person name="Gu J."/>
            <person name="Pavlov Y.I."/>
            <person name="Tahirov T.H."/>
        </authorList>
    </citation>
    <scope>X-RAY CRYSTALLOGRAPHY (2.65 ANGSTROMS) IN COMPLEX WITH ZINC</scope>
    <scope>FUNCTION</scope>
    <scope>CATALYTIC ACTIVITY</scope>
    <scope>DOMAIN</scope>
</reference>
<reference evidence="22" key="12">
    <citation type="journal article" date="2016" name="J. Biol. Chem.">
        <title>Mechanism of Concerted RNA-DNA Primer Synthesis by the Human Primosome.</title>
        <authorList>
            <person name="Baranovskiy A.G."/>
            <person name="Babayeva N.D."/>
            <person name="Zhang Y."/>
            <person name="Gu J."/>
            <person name="Suwa Y."/>
            <person name="Pavlov Y.I."/>
            <person name="Tahirov T.H."/>
        </authorList>
    </citation>
    <scope>X-RAY CRYSTALLOGRAPHY (3.60 ANGSTROMS) IN COMPLEX WITH ZINC</scope>
    <scope>FUNCTION</scope>
    <scope>CATALYTIC ACTIVITY</scope>
    <scope>SUBUNIT</scope>
    <scope>DOMAIN</scope>
</reference>
<reference evidence="23 24 25 26 27 28" key="13">
    <citation type="journal article" date="2019" name="ACS Chem. Biol.">
        <title>Structural Basis for Inhibition of Human Primase by Arabinofuranosyl Nucleoside Analogues Fludarabine and Vidarabine.</title>
        <authorList>
            <person name="Holzer S."/>
            <person name="Rzechorzek N.J."/>
            <person name="Short I.R."/>
            <person name="Jenkyn-Bedford M."/>
            <person name="Pellegrini L."/>
            <person name="Kilkenny M.L."/>
        </authorList>
    </citation>
    <scope>X-RAY CRYSTALLOGRAPHY (1.50 ANGSTROMS) OF 1-407 IN COMPLEXES WITH ZINC; MANGANESE; ATP; DATP AND INHIBITOR</scope>
    <scope>FUNCTION</scope>
    <scope>CATALYTIC ACTIVITY</scope>
    <scope>ACTIVITY REGULATION</scope>
</reference>
<reference key="14">
    <citation type="journal article" date="2020" name="Genes Dev.">
        <title>PRIM1 deficiency causes a distinctive primordial dwarfism syndrome.</title>
        <authorList>
            <consortium name="Scottish Genomes Partnership"/>
            <consortium name="Members of the Scottish Genome Partnership include"/>
            <person name="Parry D.A."/>
            <person name="Tamayo-Orrego L."/>
            <person name="Carroll P."/>
            <person name="Marsh J.A."/>
            <person name="Greene P."/>
            <person name="Murina O."/>
            <person name="Uggenti C."/>
            <person name="Leitch A."/>
            <person name="Kaposzta R."/>
            <person name="Mero G."/>
            <person name="Nagy A."/>
            <person name="Orlik B."/>
            <person name="Kovacs-Paszthy B."/>
            <person name="Quigley A.J."/>
            <person name="Riszter M."/>
            <person name="Rankin J."/>
            <person name="Reijns M.A.M."/>
            <person name="Szakszon K."/>
            <person name="Jackson A.P."/>
        </authorList>
    </citation>
    <scope>VARIANT PDIL ARG-301</scope>
    <scope>INVOLVEMENT IN PDIL</scope>
    <scope>CHARACTERIZATION OF VARIANT PDIL ARG-301</scope>
    <scope>FUNCTION</scope>
</reference>
<sequence length="420" mass="49902">METFDPTELPELLKLYYRRLFPYSQYYRWLNYGGVIKNYFQHREFSFTLKDDIYIRYQSFNNQSDLEKEMQKMNPYKIDIGAVYSHRPNQHNTVKLGAFQAQEKELVFDIDMTDYDDVRRCCSSADICPKCWTLMTMAIRIIDRALKEDFGFKHRLWVYSGRRGVHCWVCDESVRKLSSAVRSGIVEYLSLVKGGQDVKKKVHLSEKIHPFIRKSINIIKKYFEEYALVNQDILENKESWDKILALVPETIHDELQQSFQKSHNSLQRWEHLKKVASRYQNNIKNDKYGPWLEWEIMLQYCFPRLDINVSKGINHLLKSPFSVHPKTGRISVPIDLQKVDQFDPFTVPTISFICRELDAISTNEEEKEENEAESDVKHRTRDYKKTSLAPYVKVFEHFLENLDKSRKGELLKKSDLQKDF</sequence>
<protein>
    <recommendedName>
        <fullName>DNA primase small subunit</fullName>
        <ecNumber evidence="6 7 9 10 11 14">2.7.7.102</ecNumber>
    </recommendedName>
    <alternativeName>
        <fullName>DNA primase 49 kDa subunit</fullName>
        <shortName>p49</shortName>
    </alternativeName>
</protein>
<keyword id="KW-0002">3D-structure</keyword>
<keyword id="KW-0007">Acetylation</keyword>
<keyword id="KW-0225">Disease variant</keyword>
<keyword id="KW-0235">DNA replication</keyword>
<keyword id="KW-0240">DNA-directed RNA polymerase</keyword>
<keyword id="KW-0242">Dwarfism</keyword>
<keyword id="KW-0460">Magnesium</keyword>
<keyword id="KW-0464">Manganese</keyword>
<keyword id="KW-0479">Metal-binding</keyword>
<keyword id="KW-0548">Nucleotidyltransferase</keyword>
<keyword id="KW-0639">Primosome</keyword>
<keyword id="KW-1267">Proteomics identification</keyword>
<keyword id="KW-1185">Reference proteome</keyword>
<keyword id="KW-0804">Transcription</keyword>
<keyword id="KW-0808">Transferase</keyword>
<keyword id="KW-0862">Zinc</keyword>
<gene>
    <name type="primary">PRIM1</name>
</gene>
<organism>
    <name type="scientific">Homo sapiens</name>
    <name type="common">Human</name>
    <dbReference type="NCBI Taxonomy" id="9606"/>
    <lineage>
        <taxon>Eukaryota</taxon>
        <taxon>Metazoa</taxon>
        <taxon>Chordata</taxon>
        <taxon>Craniata</taxon>
        <taxon>Vertebrata</taxon>
        <taxon>Euteleostomi</taxon>
        <taxon>Mammalia</taxon>
        <taxon>Eutheria</taxon>
        <taxon>Euarchontoglires</taxon>
        <taxon>Primates</taxon>
        <taxon>Haplorrhini</taxon>
        <taxon>Catarrhini</taxon>
        <taxon>Hominidae</taxon>
        <taxon>Homo</taxon>
    </lineage>
</organism>
<dbReference type="EC" id="2.7.7.102" evidence="6 7 9 10 11 14"/>
<dbReference type="EMBL" id="X74330">
    <property type="protein sequence ID" value="CAA52377.1"/>
    <property type="molecule type" value="mRNA"/>
</dbReference>
<dbReference type="EMBL" id="BC005266">
    <property type="protein sequence ID" value="AAH05266.1"/>
    <property type="molecule type" value="mRNA"/>
</dbReference>
<dbReference type="EMBL" id="U89689">
    <property type="protein sequence ID" value="AAC51726.1"/>
    <property type="molecule type" value="Genomic_DNA"/>
</dbReference>
<dbReference type="CCDS" id="CCDS44926.1"/>
<dbReference type="PIR" id="S45630">
    <property type="entry name" value="S45630"/>
</dbReference>
<dbReference type="RefSeq" id="NP_000937.1">
    <property type="nucleotide sequence ID" value="NM_000946.3"/>
</dbReference>
<dbReference type="PDB" id="4BPU">
    <property type="method" value="X-ray"/>
    <property type="resolution" value="2.70 A"/>
    <property type="chains" value="A/C=1-420"/>
</dbReference>
<dbReference type="PDB" id="4BPW">
    <property type="method" value="X-ray"/>
    <property type="resolution" value="3.00 A"/>
    <property type="chains" value="A/C=1-420"/>
</dbReference>
<dbReference type="PDB" id="4BPX">
    <property type="method" value="X-ray"/>
    <property type="resolution" value="3.40 A"/>
    <property type="chains" value="A/C=1-420"/>
</dbReference>
<dbReference type="PDB" id="4LIK">
    <property type="method" value="X-ray"/>
    <property type="resolution" value="1.70 A"/>
    <property type="chains" value="A=1-408"/>
</dbReference>
<dbReference type="PDB" id="4LIL">
    <property type="method" value="X-ray"/>
    <property type="resolution" value="2.60 A"/>
    <property type="chains" value="A=1-408"/>
</dbReference>
<dbReference type="PDB" id="4MHQ">
    <property type="method" value="X-ray"/>
    <property type="resolution" value="2.20 A"/>
    <property type="chains" value="A=1-420"/>
</dbReference>
<dbReference type="PDB" id="4RR2">
    <property type="method" value="X-ray"/>
    <property type="resolution" value="2.65 A"/>
    <property type="chains" value="A/C=1-420"/>
</dbReference>
<dbReference type="PDB" id="5EXR">
    <property type="method" value="X-ray"/>
    <property type="resolution" value="3.60 A"/>
    <property type="chains" value="A/E=1-420"/>
</dbReference>
<dbReference type="PDB" id="6R4S">
    <property type="method" value="X-ray"/>
    <property type="resolution" value="2.75 A"/>
    <property type="chains" value="A/E=1-407"/>
</dbReference>
<dbReference type="PDB" id="6R4T">
    <property type="method" value="X-ray"/>
    <property type="resolution" value="2.35 A"/>
    <property type="chains" value="A/D=1-407"/>
</dbReference>
<dbReference type="PDB" id="6R4U">
    <property type="method" value="X-ray"/>
    <property type="resolution" value="2.20 A"/>
    <property type="chains" value="A/E=1-407"/>
</dbReference>
<dbReference type="PDB" id="6R5D">
    <property type="method" value="X-ray"/>
    <property type="resolution" value="1.95 A"/>
    <property type="chains" value="A/E=1-407"/>
</dbReference>
<dbReference type="PDB" id="6R5E">
    <property type="method" value="X-ray"/>
    <property type="resolution" value="1.85 A"/>
    <property type="chains" value="A/E=1-407"/>
</dbReference>
<dbReference type="PDB" id="6RB4">
    <property type="method" value="X-ray"/>
    <property type="resolution" value="1.50 A"/>
    <property type="chains" value="A=1-407"/>
</dbReference>
<dbReference type="PDB" id="7OPL">
    <property type="method" value="EM"/>
    <property type="resolution" value="4.12 A"/>
    <property type="chains" value="C=1-420"/>
</dbReference>
<dbReference type="PDB" id="7U5C">
    <property type="method" value="EM"/>
    <property type="resolution" value="4.60 A"/>
    <property type="chains" value="A=1-420"/>
</dbReference>
<dbReference type="PDB" id="8B9D">
    <property type="method" value="EM"/>
    <property type="resolution" value="3.40 A"/>
    <property type="chains" value="O=1-420"/>
</dbReference>
<dbReference type="PDB" id="8D0B">
    <property type="method" value="EM"/>
    <property type="resolution" value="3.43 A"/>
    <property type="chains" value="D=2-420"/>
</dbReference>
<dbReference type="PDB" id="8D0K">
    <property type="method" value="EM"/>
    <property type="resolution" value="4.27 A"/>
    <property type="chains" value="D=2-420"/>
</dbReference>
<dbReference type="PDB" id="8D9D">
    <property type="method" value="EM"/>
    <property type="resolution" value="3.59 A"/>
    <property type="chains" value="A=1-420"/>
</dbReference>
<dbReference type="PDB" id="8QJ7">
    <property type="method" value="EM"/>
    <property type="resolution" value="3.07 A"/>
    <property type="chains" value="C=1-420"/>
</dbReference>
<dbReference type="PDB" id="8VY3">
    <property type="method" value="EM"/>
    <property type="resolution" value="2.98 A"/>
    <property type="chains" value="A=1-412"/>
</dbReference>
<dbReference type="PDB" id="9C8V">
    <property type="method" value="EM"/>
    <property type="resolution" value="3.39 A"/>
    <property type="chains" value="A=1-412"/>
</dbReference>
<dbReference type="PDBsum" id="4BPU"/>
<dbReference type="PDBsum" id="4BPW"/>
<dbReference type="PDBsum" id="4BPX"/>
<dbReference type="PDBsum" id="4LIK"/>
<dbReference type="PDBsum" id="4LIL"/>
<dbReference type="PDBsum" id="4MHQ"/>
<dbReference type="PDBsum" id="4RR2"/>
<dbReference type="PDBsum" id="5EXR"/>
<dbReference type="PDBsum" id="6R4S"/>
<dbReference type="PDBsum" id="6R4T"/>
<dbReference type="PDBsum" id="6R4U"/>
<dbReference type="PDBsum" id="6R5D"/>
<dbReference type="PDBsum" id="6R5E"/>
<dbReference type="PDBsum" id="6RB4"/>
<dbReference type="PDBsum" id="7OPL"/>
<dbReference type="PDBsum" id="7U5C"/>
<dbReference type="PDBsum" id="8B9D"/>
<dbReference type="PDBsum" id="8D0B"/>
<dbReference type="PDBsum" id="8D0K"/>
<dbReference type="PDBsum" id="8D9D"/>
<dbReference type="PDBsum" id="8QJ7"/>
<dbReference type="PDBsum" id="8VY3"/>
<dbReference type="PDBsum" id="9C8V"/>
<dbReference type="EMDB" id="EMD-13020"/>
<dbReference type="EMDB" id="EMD-26346"/>
<dbReference type="EMDB" id="EMD-26347"/>
<dbReference type="EMDB" id="EMD-27104"/>
<dbReference type="EMDB" id="EMD-27107"/>
<dbReference type="EMDB" id="EMD-27258"/>
<dbReference type="EMDB" id="EMD-42033"/>
<dbReference type="EMDB" id="EMD-42034"/>
<dbReference type="EMDB" id="EMD-42035"/>
<dbReference type="EMDB" id="EMD-42036"/>
<dbReference type="EMDB" id="EMD-42037"/>
<dbReference type="SASBDB" id="P49642"/>
<dbReference type="SMR" id="P49642"/>
<dbReference type="BioGRID" id="111547">
    <property type="interactions" value="237"/>
</dbReference>
<dbReference type="ComplexPortal" id="CPX-2087">
    <property type="entry name" value="DNA polymerase alpha:primase complex"/>
</dbReference>
<dbReference type="CORUM" id="P49642"/>
<dbReference type="FunCoup" id="P49642">
    <property type="interactions" value="1324"/>
</dbReference>
<dbReference type="IntAct" id="P49642">
    <property type="interactions" value="63"/>
</dbReference>
<dbReference type="MINT" id="P49642"/>
<dbReference type="STRING" id="9606.ENSP00000350491"/>
<dbReference type="ChEMBL" id="CHEMBL2363042"/>
<dbReference type="DrugBank" id="DB01280">
    <property type="generic name" value="Nelarabine"/>
</dbReference>
<dbReference type="iPTMnet" id="P49642"/>
<dbReference type="PhosphoSitePlus" id="P49642"/>
<dbReference type="BioMuta" id="PRIM1"/>
<dbReference type="DMDM" id="1346792"/>
<dbReference type="jPOST" id="P49642"/>
<dbReference type="MassIVE" id="P49642"/>
<dbReference type="PaxDb" id="9606-ENSP00000350491"/>
<dbReference type="PeptideAtlas" id="P49642"/>
<dbReference type="ProteomicsDB" id="56040"/>
<dbReference type="Pumba" id="P49642"/>
<dbReference type="Antibodypedia" id="8376">
    <property type="antibodies" value="185 antibodies from 32 providers"/>
</dbReference>
<dbReference type="DNASU" id="5557"/>
<dbReference type="Ensembl" id="ENST00000338193.11">
    <property type="protein sequence ID" value="ENSP00000350491.5"/>
    <property type="gene ID" value="ENSG00000198056.16"/>
</dbReference>
<dbReference type="Ensembl" id="ENST00000706566.1">
    <property type="protein sequence ID" value="ENSP00000516451.1"/>
    <property type="gene ID" value="ENSG00000198056.16"/>
</dbReference>
<dbReference type="GeneID" id="5557"/>
<dbReference type="KEGG" id="hsa:5557"/>
<dbReference type="MANE-Select" id="ENST00000338193.11">
    <property type="protein sequence ID" value="ENSP00000350491.5"/>
    <property type="RefSeq nucleotide sequence ID" value="NM_000946.3"/>
    <property type="RefSeq protein sequence ID" value="NP_000937.1"/>
</dbReference>
<dbReference type="UCSC" id="uc001smd.4">
    <property type="organism name" value="human"/>
</dbReference>
<dbReference type="AGR" id="HGNC:9369"/>
<dbReference type="CTD" id="5557"/>
<dbReference type="DisGeNET" id="5557"/>
<dbReference type="GeneCards" id="PRIM1"/>
<dbReference type="HGNC" id="HGNC:9369">
    <property type="gene designation" value="PRIM1"/>
</dbReference>
<dbReference type="HPA" id="ENSG00000198056">
    <property type="expression patterns" value="Tissue enhanced (bone)"/>
</dbReference>
<dbReference type="MalaCards" id="PRIM1"/>
<dbReference type="MIM" id="176635">
    <property type="type" value="gene"/>
</dbReference>
<dbReference type="MIM" id="620005">
    <property type="type" value="phenotype"/>
</dbReference>
<dbReference type="neXtProt" id="NX_P49642"/>
<dbReference type="OpenTargets" id="ENSG00000198056"/>
<dbReference type="PharmGKB" id="PA33739"/>
<dbReference type="VEuPathDB" id="HostDB:ENSG00000198056"/>
<dbReference type="eggNOG" id="KOG2851">
    <property type="taxonomic scope" value="Eukaryota"/>
</dbReference>
<dbReference type="GeneTree" id="ENSGT00390000011466"/>
<dbReference type="HOGENOM" id="CLU_028288_0_1_1"/>
<dbReference type="InParanoid" id="P49642"/>
<dbReference type="OMA" id="NVTRGFN"/>
<dbReference type="OrthoDB" id="19606at2759"/>
<dbReference type="PAN-GO" id="P49642">
    <property type="GO annotations" value="3 GO annotations based on evolutionary models"/>
</dbReference>
<dbReference type="PhylomeDB" id="P49642"/>
<dbReference type="TreeFam" id="TF312823"/>
<dbReference type="BRENDA" id="2.7.7.102">
    <property type="organism ID" value="2681"/>
</dbReference>
<dbReference type="PathwayCommons" id="P49642"/>
<dbReference type="Reactome" id="R-HSA-113501">
    <property type="pathway name" value="Inhibition of replication initiation of damaged DNA by RB1/E2F1"/>
</dbReference>
<dbReference type="Reactome" id="R-HSA-174411">
    <property type="pathway name" value="Polymerase switching on the C-strand of the telomere"/>
</dbReference>
<dbReference type="Reactome" id="R-HSA-174430">
    <property type="pathway name" value="Telomere C-strand synthesis initiation"/>
</dbReference>
<dbReference type="Reactome" id="R-HSA-68952">
    <property type="pathway name" value="DNA replication initiation"/>
</dbReference>
<dbReference type="Reactome" id="R-HSA-68962">
    <property type="pathway name" value="Activation of the pre-replicative complex"/>
</dbReference>
<dbReference type="Reactome" id="R-HSA-69091">
    <property type="pathway name" value="Polymerase switching"/>
</dbReference>
<dbReference type="Reactome" id="R-HSA-69166">
    <property type="pathway name" value="Removal of the Flap Intermediate"/>
</dbReference>
<dbReference type="Reactome" id="R-HSA-69183">
    <property type="pathway name" value="Processive synthesis on the lagging strand"/>
</dbReference>
<dbReference type="Reactome" id="R-HSA-9710421">
    <property type="pathway name" value="Defective pyroptosis"/>
</dbReference>
<dbReference type="SignaLink" id="P49642"/>
<dbReference type="SIGNOR" id="P49642"/>
<dbReference type="BioGRID-ORCS" id="5557">
    <property type="hits" value="797 hits in 1172 CRISPR screens"/>
</dbReference>
<dbReference type="ChiTaRS" id="PRIM1">
    <property type="organism name" value="human"/>
</dbReference>
<dbReference type="EvolutionaryTrace" id="P49642"/>
<dbReference type="GenomeRNAi" id="5557"/>
<dbReference type="Pharos" id="P49642">
    <property type="development level" value="Tbio"/>
</dbReference>
<dbReference type="PRO" id="PR:P49642"/>
<dbReference type="Proteomes" id="UP000005640">
    <property type="component" value="Chromosome 12"/>
</dbReference>
<dbReference type="RNAct" id="P49642">
    <property type="molecule type" value="protein"/>
</dbReference>
<dbReference type="Bgee" id="ENSG00000198056">
    <property type="expression patterns" value="Expressed in primordial germ cell in gonad and 106 other cell types or tissues"/>
</dbReference>
<dbReference type="ExpressionAtlas" id="P49642">
    <property type="expression patterns" value="baseline and differential"/>
</dbReference>
<dbReference type="GO" id="GO:0005658">
    <property type="term" value="C:alpha DNA polymerase:primase complex"/>
    <property type="evidence" value="ECO:0000314"/>
    <property type="project" value="UniProtKB"/>
</dbReference>
<dbReference type="GO" id="GO:0016020">
    <property type="term" value="C:membrane"/>
    <property type="evidence" value="ECO:0007005"/>
    <property type="project" value="UniProtKB"/>
</dbReference>
<dbReference type="GO" id="GO:0005654">
    <property type="term" value="C:nucleoplasm"/>
    <property type="evidence" value="ECO:0000304"/>
    <property type="project" value="Reactome"/>
</dbReference>
<dbReference type="GO" id="GO:0003899">
    <property type="term" value="F:DNA-directed RNA polymerase activity"/>
    <property type="evidence" value="ECO:0000314"/>
    <property type="project" value="UniProtKB"/>
</dbReference>
<dbReference type="GO" id="GO:0000287">
    <property type="term" value="F:magnesium ion binding"/>
    <property type="evidence" value="ECO:0000314"/>
    <property type="project" value="UniProtKB"/>
</dbReference>
<dbReference type="GO" id="GO:0032553">
    <property type="term" value="F:ribonucleotide binding"/>
    <property type="evidence" value="ECO:0000314"/>
    <property type="project" value="UniProtKB"/>
</dbReference>
<dbReference type="GO" id="GO:0008270">
    <property type="term" value="F:zinc ion binding"/>
    <property type="evidence" value="ECO:0000314"/>
    <property type="project" value="UniProtKB"/>
</dbReference>
<dbReference type="GO" id="GO:0006270">
    <property type="term" value="P:DNA replication initiation"/>
    <property type="evidence" value="ECO:0000314"/>
    <property type="project" value="ComplexPortal"/>
</dbReference>
<dbReference type="GO" id="GO:0006269">
    <property type="term" value="P:DNA replication, synthesis of primer"/>
    <property type="evidence" value="ECO:0000314"/>
    <property type="project" value="UniProtKB"/>
</dbReference>
<dbReference type="CDD" id="cd04860">
    <property type="entry name" value="AE_Prim_S"/>
    <property type="match status" value="1"/>
</dbReference>
<dbReference type="FunFam" id="3.90.920.10:FF:000001">
    <property type="entry name" value="DNA primase"/>
    <property type="match status" value="1"/>
</dbReference>
<dbReference type="Gene3D" id="3.90.920.10">
    <property type="entry name" value="DNA primase, PRIM domain"/>
    <property type="match status" value="1"/>
</dbReference>
<dbReference type="InterPro" id="IPR002755">
    <property type="entry name" value="DNA_primase_S"/>
</dbReference>
<dbReference type="InterPro" id="IPR014052">
    <property type="entry name" value="DNA_primase_ssu_euk/arc"/>
</dbReference>
<dbReference type="NCBIfam" id="TIGR00335">
    <property type="entry name" value="primase_sml"/>
    <property type="match status" value="1"/>
</dbReference>
<dbReference type="PANTHER" id="PTHR10536">
    <property type="entry name" value="DNA PRIMASE SMALL SUBUNIT"/>
    <property type="match status" value="1"/>
</dbReference>
<dbReference type="Pfam" id="PF01896">
    <property type="entry name" value="DNA_primase_S"/>
    <property type="match status" value="1"/>
</dbReference>
<dbReference type="SUPFAM" id="SSF56747">
    <property type="entry name" value="Prim-pol domain"/>
    <property type="match status" value="1"/>
</dbReference>
<evidence type="ECO:0000250" key="1"/>
<evidence type="ECO:0000250" key="2">
    <source>
        <dbReference type="UniProtKB" id="P09884"/>
    </source>
</evidence>
<evidence type="ECO:0000250" key="3">
    <source>
        <dbReference type="UniProtKB" id="P20664"/>
    </source>
</evidence>
<evidence type="ECO:0000255" key="4"/>
<evidence type="ECO:0000256" key="5">
    <source>
        <dbReference type="SAM" id="MobiDB-lite"/>
    </source>
</evidence>
<evidence type="ECO:0000269" key="6">
    <source>
    </source>
</evidence>
<evidence type="ECO:0000269" key="7">
    <source>
    </source>
</evidence>
<evidence type="ECO:0000269" key="8">
    <source>
    </source>
</evidence>
<evidence type="ECO:0000269" key="9">
    <source>
    </source>
</evidence>
<evidence type="ECO:0000269" key="10">
    <source>
    </source>
</evidence>
<evidence type="ECO:0000269" key="11">
    <source>
    </source>
</evidence>
<evidence type="ECO:0000269" key="12">
    <source>
    </source>
</evidence>
<evidence type="ECO:0000269" key="13">
    <source>
    </source>
</evidence>
<evidence type="ECO:0000269" key="14">
    <source>
    </source>
</evidence>
<evidence type="ECO:0000305" key="15"/>
<evidence type="ECO:0007744" key="16">
    <source>
        <dbReference type="PDB" id="4BPU"/>
    </source>
</evidence>
<evidence type="ECO:0007744" key="17">
    <source>
        <dbReference type="PDB" id="4BPW"/>
    </source>
</evidence>
<evidence type="ECO:0007744" key="18">
    <source>
        <dbReference type="PDB" id="4BPX"/>
    </source>
</evidence>
<evidence type="ECO:0007744" key="19">
    <source>
        <dbReference type="PDB" id="4LIK"/>
    </source>
</evidence>
<evidence type="ECO:0007744" key="20">
    <source>
        <dbReference type="PDB" id="4LIL"/>
    </source>
</evidence>
<evidence type="ECO:0007744" key="21">
    <source>
        <dbReference type="PDB" id="4RR2"/>
    </source>
</evidence>
<evidence type="ECO:0007744" key="22">
    <source>
        <dbReference type="PDB" id="5EXR"/>
    </source>
</evidence>
<evidence type="ECO:0007744" key="23">
    <source>
        <dbReference type="PDB" id="6R4S"/>
    </source>
</evidence>
<evidence type="ECO:0007744" key="24">
    <source>
        <dbReference type="PDB" id="6R4T"/>
    </source>
</evidence>
<evidence type="ECO:0007744" key="25">
    <source>
        <dbReference type="PDB" id="6R4U"/>
    </source>
</evidence>
<evidence type="ECO:0007744" key="26">
    <source>
        <dbReference type="PDB" id="6R5D"/>
    </source>
</evidence>
<evidence type="ECO:0007744" key="27">
    <source>
        <dbReference type="PDB" id="6R5E"/>
    </source>
</evidence>
<evidence type="ECO:0007744" key="28">
    <source>
        <dbReference type="PDB" id="6RB4"/>
    </source>
</evidence>
<evidence type="ECO:0007744" key="29">
    <source>
    </source>
</evidence>
<evidence type="ECO:0007829" key="30">
    <source>
        <dbReference type="PDB" id="4LIK"/>
    </source>
</evidence>
<evidence type="ECO:0007829" key="31">
    <source>
        <dbReference type="PDB" id="4RR2"/>
    </source>
</evidence>
<evidence type="ECO:0007829" key="32">
    <source>
        <dbReference type="PDB" id="6R5D"/>
    </source>
</evidence>
<evidence type="ECO:0007829" key="33">
    <source>
        <dbReference type="PDB" id="6RB4"/>
    </source>
</evidence>
<comment type="function">
    <text evidence="2 3 6 9 10 12 13 14">Catalytic subunit of the DNA primase complex and component of the DNA polymerase alpha complex (also known as the alpha DNA polymerase-primase complex - primosome/replisome) which play an essential role in the initiation of DNA synthesis (PubMed:17893144, PubMed:24043831, PubMed:25550159, PubMed:26975377, PubMed:31479243, PubMed:33060134, PubMed:9268648, PubMed:9705292). During the S phase of the cell cycle, the DNA polymerase alpha complex (composed of a catalytic subunit POLA1, an accessory subunit POLA2 and two primase subunits, the catalytic subunit PRIM1 and the regulatory subunit PRIM2) is recruited to DNA at the replicative forks via direct interactions with MCM10 and WDHD1 (By similarity). The primase subunit of the polymerase alpha complex initiates DNA synthesis by oligomerising short RNA primers on both leading and lagging strands (PubMed:17893144). These primers are initially extended by the polymerase alpha catalytic subunit and subsequently transferred to polymerase delta and polymerase epsilon for processive synthesis on the lagging and leading strand, respectively (By similarity). In the primase complex, both subunits are necessary for the initial di-nucleotide formation, but the extension of the primer depends only on the catalytic subunit (PubMed:17893144). Synthesizes 9-mer RNA primers (also known as the 'unit length' RNA primers). Incorporates only ribonucleotides in the presence of ribo- and deoxy-nucleotide triphosphates (rNTPs, dNTPs) (PubMed:26975377). Requires template thymine or cytidine to start the RNA primer synthesis, with an adenine or guanine at its 5'-end (PubMed:25550159, PubMed:26975377). Binds single stranded DNA (By similarity).</text>
</comment>
<comment type="catalytic activity">
    <reaction evidence="6 7 9 10 11 14">
        <text>ssDNA + n NTP = ssDNA/pppN(pN)n-1 hybrid + (n-1) diphosphate.</text>
        <dbReference type="EC" id="2.7.7.102"/>
    </reaction>
</comment>
<comment type="cofactor">
    <cofactor evidence="14">
        <name>Mg(2+)</name>
        <dbReference type="ChEBI" id="CHEBI:18420"/>
    </cofactor>
    <cofactor evidence="8 14">
        <name>Mn(2+)</name>
        <dbReference type="ChEBI" id="CHEBI:29035"/>
    </cofactor>
</comment>
<comment type="activity regulation">
    <text evidence="3 11">The presence of the regulatory subunit PRIM2/p58 accelerates the kinetics of initiation and primer extension (By similarity). Inhibited by arabinose nucleoside derivatives such as fludarabine and vidarabine (PubMed:31479243).</text>
</comment>
<comment type="subunit">
    <text evidence="3 6 14">Heterodimer of a catalytic subunit PRIM1 and a regulatory subunit PRIM2, also known as the DNA primase complex (PubMed:17893144, PubMed:9705292). Interacts with PRIM2 (via C-terminus) (PubMed:17893144). Component of the alpha DNA polymerase complex (also known as the alpha DNA polymerase-primase complex) consisting of four subunits: the catalytic subunit POLA1, the regulatory subunit POLA2, and the primase complex subunits PRIM1 and PRIM2 respectively (PubMed:24043831, PubMed:26975377, PubMed:9705292). Within the complex, POLA1 directly interacts with PRIM2 (By similarity).</text>
</comment>
<comment type="interaction">
    <interactant intactId="EBI-726050">
        <id>P49642</id>
    </interactant>
    <interactant intactId="EBI-466029">
        <id>P42858</id>
        <label>HTT</label>
    </interactant>
    <organismsDiffer>false</organismsDiffer>
    <experiments>3</experiments>
</comment>
<comment type="interaction">
    <interactant intactId="EBI-726050">
        <id>P49642</id>
    </interactant>
    <interactant intactId="EBI-850004">
        <id>P49643</id>
        <label>PRIM2</label>
    </interactant>
    <organismsDiffer>false</organismsDiffer>
    <experiments>8</experiments>
</comment>
<comment type="domain">
    <text evidence="7 8 9 10">The catalytic domain (residues 1-190 and 303-408) adopts a typical 'prim' fold structure formed by two three strand beta-sheets that line the inside of the lower and upper parts, each surrounded by alpha-helices on the outside (PubMed:24043831, PubMed:24239947). It comprises a highly conserved catalytic triad, a structural zinc-binding motif and the nucleotide-binding motifs. The Asp-109, Asp-111 and Asp-306 catalytic triad binds two Mn2+ or Mg2+ ions which activate for nucleophilic attack the 3'-hydroxyl of the growing RNA primer or of the first NTP bound at the initiation site (PubMed:24043831, PubMed:24239947, PubMed:25550159, PubMed:26975377). The nucleotide-binding motifs coordinate the phosphates, the ribose and the base of a NTP molecule (PubMed:24043831). The interaction between O2' of the initiating NTP and Asp-306 stabilizes the ribose during the di-nucleotide synthesis (PubMed:26975377). It is proposed that the first nucleotide binds to the elongation site, followed by binding to the initiation site of a second NTP, which will become the 5'-terminal nucleotide of the primer (PubMed:26975377).</text>
</comment>
<comment type="disease" evidence="12">
    <disease id="DI-06484">
        <name>Primordial dwarfism-immunodeficiency-lipodystrophy syndrome</name>
        <acronym>PDIL</acronym>
        <description>An autosomal recessive syndrome characterized by growth failure with in utero growth retardation and severe postnatal growth restriction, severe microcephaly, absence of subcutaneous fat, and significant haematological and immune dysfunction. Patients have hypo- or agammaglobulinemia, lymphopenia, anemia, and thrombocytopenia. Most affected individuals die in early childhood from either respiratory or gastrointestinal infections.</description>
        <dbReference type="MIM" id="620005"/>
    </disease>
    <text>The disease is caused by variants affecting the gene represented in this entry.</text>
</comment>
<comment type="miscellaneous">
    <text evidence="1">The bound zinc ion is not a cofactor. It is bound to a zinc knuckle motif that may be involved in sequence recognition and the binding of ssDNA (By similarity).</text>
</comment>
<comment type="similarity">
    <text evidence="15">Belongs to the eukaryotic-type primase small subunit family.</text>
</comment>
<proteinExistence type="evidence at protein level"/>
<name>PRI1_HUMAN</name>
<accession>P49642</accession>
<feature type="chain" id="PRO_0000046730" description="DNA primase small subunit">
    <location>
        <begin position="1"/>
        <end position="420"/>
    </location>
</feature>
<feature type="region of interest" description="Disordered" evidence="5">
    <location>
        <begin position="363"/>
        <end position="382"/>
    </location>
</feature>
<feature type="short sequence motif" description="Zinc knuckle motif" evidence="7 9 10">
    <location>
        <begin position="121"/>
        <end position="131"/>
    </location>
</feature>
<feature type="compositionally biased region" description="Acidic residues" evidence="5">
    <location>
        <begin position="363"/>
        <end position="373"/>
    </location>
</feature>
<feature type="active site" evidence="4">
    <location>
        <position position="44"/>
    </location>
</feature>
<feature type="active site" evidence="4">
    <location>
        <position position="109"/>
    </location>
</feature>
<feature type="active site" evidence="4">
    <location>
        <position position="111"/>
    </location>
</feature>
<feature type="binding site" evidence="7 11">
    <location>
        <begin position="109"/>
        <end position="111"/>
    </location>
    <ligand>
        <name>a ribonucleoside 5'-triphosphate</name>
        <dbReference type="ChEBI" id="CHEBI:61557"/>
    </ligand>
</feature>
<feature type="binding site" evidence="7 17">
    <location>
        <position position="109"/>
    </location>
    <ligand>
        <name>Mg(2+)</name>
        <dbReference type="ChEBI" id="CHEBI:18420"/>
        <label>1</label>
    </ligand>
</feature>
<feature type="binding site" evidence="7 17">
    <location>
        <position position="109"/>
    </location>
    <ligand>
        <name>Mg(2+)</name>
        <dbReference type="ChEBI" id="CHEBI:18420"/>
        <label>2</label>
    </ligand>
</feature>
<feature type="binding site" evidence="11 23">
    <location>
        <position position="109"/>
    </location>
    <ligand>
        <name>Mn(2+)</name>
        <dbReference type="ChEBI" id="CHEBI:29035"/>
        <label>1</label>
    </ligand>
</feature>
<feature type="binding site" evidence="11 23">
    <location>
        <position position="109"/>
    </location>
    <ligand>
        <name>Mn(2+)</name>
        <dbReference type="ChEBI" id="CHEBI:29035"/>
        <label>2</label>
    </ligand>
</feature>
<feature type="binding site" evidence="7 17">
    <location>
        <position position="111"/>
    </location>
    <ligand>
        <name>Mg(2+)</name>
        <dbReference type="ChEBI" id="CHEBI:18420"/>
        <label>1</label>
    </ligand>
</feature>
<feature type="binding site" evidence="7 17">
    <location>
        <position position="111"/>
    </location>
    <ligand>
        <name>Mg(2+)</name>
        <dbReference type="ChEBI" id="CHEBI:18420"/>
        <label>2</label>
    </ligand>
</feature>
<feature type="binding site" evidence="11 23">
    <location>
        <position position="111"/>
    </location>
    <ligand>
        <name>Mn(2+)</name>
        <dbReference type="ChEBI" id="CHEBI:29035"/>
        <label>1</label>
    </ligand>
</feature>
<feature type="binding site" evidence="11 23">
    <location>
        <position position="111"/>
    </location>
    <ligand>
        <name>Mn(2+)</name>
        <dbReference type="ChEBI" id="CHEBI:29035"/>
        <label>2</label>
    </ligand>
</feature>
<feature type="binding site" evidence="7 9 10 11">
    <location>
        <position position="121"/>
    </location>
    <ligand>
        <name>Zn(2+)</name>
        <dbReference type="ChEBI" id="CHEBI:29105"/>
    </ligand>
</feature>
<feature type="binding site" evidence="7 9 10 11">
    <location>
        <position position="122"/>
    </location>
    <ligand>
        <name>Zn(2+)</name>
        <dbReference type="ChEBI" id="CHEBI:29105"/>
    </ligand>
</feature>
<feature type="binding site" evidence="7 9 10 11">
    <location>
        <position position="128"/>
    </location>
    <ligand>
        <name>Zn(2+)</name>
        <dbReference type="ChEBI" id="CHEBI:29105"/>
    </ligand>
</feature>
<feature type="binding site" evidence="7 9 10 11">
    <location>
        <position position="131"/>
    </location>
    <ligand>
        <name>Zn(2+)</name>
        <dbReference type="ChEBI" id="CHEBI:29105"/>
    </ligand>
</feature>
<feature type="binding site" evidence="7 8 11">
    <location>
        <begin position="160"/>
        <end position="166"/>
    </location>
    <ligand>
        <name>a ribonucleoside 5'-triphosphate</name>
        <dbReference type="ChEBI" id="CHEBI:61557"/>
    </ligand>
</feature>
<feature type="binding site" evidence="7 17">
    <location>
        <position position="306"/>
    </location>
    <ligand>
        <name>Mg(2+)</name>
        <dbReference type="ChEBI" id="CHEBI:18420"/>
        <label>2</label>
    </ligand>
</feature>
<feature type="binding site" evidence="11 23">
    <location>
        <position position="306"/>
    </location>
    <ligand>
        <name>Mn(2+)</name>
        <dbReference type="ChEBI" id="CHEBI:29035"/>
        <label>2</label>
    </ligand>
</feature>
<feature type="binding site" evidence="7 11">
    <location>
        <begin position="315"/>
        <end position="318"/>
    </location>
    <ligand>
        <name>a ribonucleoside 5'-triphosphate</name>
        <dbReference type="ChEBI" id="CHEBI:61557"/>
    </ligand>
</feature>
<feature type="binding site" evidence="11">
    <location>
        <position position="324"/>
    </location>
    <ligand>
        <name>a ribonucleoside 5'-triphosphate</name>
        <dbReference type="ChEBI" id="CHEBI:61557"/>
    </ligand>
</feature>
<feature type="modified residue" description="N-acetylmethionine" evidence="29">
    <location>
        <position position="1"/>
    </location>
</feature>
<feature type="sequence variant" id="VAR_021898" description="In dbSNP:rs2277339.">
    <original>D</original>
    <variation>A</variation>
    <location>
        <position position="5"/>
    </location>
</feature>
<feature type="sequence variant" id="VAR_087657" description="In PDIL; loss of function in DNA replication initiation; contrary to the wild type, the mutant does not rescue reduced cell proliferation, prolonged S-phase and impaired DNA replication when transfected in patient cells." evidence="12">
    <original>C</original>
    <variation>R</variation>
    <location>
        <position position="301"/>
    </location>
</feature>
<feature type="mutagenesis site" description="Strongly decreases primase activity, which can be partially rescued by increasing primase concentration." evidence="7">
    <original>E</original>
    <variation>A</variation>
    <location>
        <position position="44"/>
    </location>
</feature>
<feature type="mutagenesis site" description="Decreases primase activity." evidence="7">
    <original>Y</original>
    <variation>A</variation>
    <location>
        <position position="54"/>
    </location>
</feature>
<feature type="mutagenesis site" description="Loss of primase activity." evidence="7">
    <original>R</original>
    <variation>A</variation>
    <location>
        <position position="56"/>
    </location>
</feature>
<feature type="mutagenesis site" description="Decreases primase activity." evidence="7">
    <original>K</original>
    <variation>A</variation>
    <location>
        <position position="77"/>
    </location>
</feature>
<feature type="mutagenesis site" description="Loss of primase activity." evidence="7">
    <original>D</original>
    <variation>A</variation>
    <location>
        <position position="109"/>
    </location>
</feature>
<feature type="mutagenesis site" description="Decreases the binding affinity for NTPs." evidence="8">
    <original>D</original>
    <variation>N</variation>
    <location>
        <position position="109"/>
    </location>
</feature>
<feature type="mutagenesis site" description="Loss of primase activity." evidence="7">
    <original>D</original>
    <variation>A</variation>
    <location>
        <position position="111"/>
    </location>
</feature>
<feature type="mutagenesis site" description="Decreases the binding affinity for NTPs." evidence="8">
    <original>D</original>
    <variation>N</variation>
    <location>
        <position position="111"/>
    </location>
</feature>
<feature type="mutagenesis site" description="Slightly decreases primase activity." evidence="7">
    <original>D</original>
    <variation>A</variation>
    <location>
        <position position="114"/>
    </location>
</feature>
<feature type="mutagenesis site" description="Slightly decreases primase activity." evidence="7">
    <original>D</original>
    <variation>A</variation>
    <location>
        <position position="116"/>
    </location>
</feature>
<feature type="mutagenesis site" description="Abolishes NTP binding." evidence="8">
    <original>S</original>
    <variation>A</variation>
    <location>
        <position position="160"/>
    </location>
</feature>
<feature type="mutagenesis site" description="Abolishes NTP binding." evidence="8">
    <original>R</original>
    <variation>A</variation>
    <location>
        <position position="163"/>
    </location>
</feature>
<feature type="mutagenesis site" description="Abolishes NTP binding. Loss of primase activity." evidence="7 8">
    <original>H</original>
    <variation>A</variation>
    <location>
        <position position="166"/>
    </location>
</feature>
<feature type="mutagenesis site" description="Loss of primase activity." evidence="7">
    <original>D</original>
    <variation>A</variation>
    <location>
        <position position="306"/>
    </location>
</feature>
<feature type="mutagenesis site" description="Decreases the binding affinity for NTPs." evidence="8">
    <original>D</original>
    <variation>N</variation>
    <location>
        <position position="306"/>
    </location>
</feature>
<feature type="mutagenesis site" description="Decreases the binding affinity for NTPs. Loss of primase activity." evidence="7 8">
    <original>H</original>
    <variation>A</variation>
    <location>
        <position position="315"/>
    </location>
</feature>
<feature type="mutagenesis site" description="Decreases the binding affinity for NTPs. Loss of primase activity." evidence="7 8">
    <original>K</original>
    <variation>A</variation>
    <location>
        <position position="318"/>
    </location>
</feature>
<feature type="mutagenesis site" description="Strongly decreases primase activity, which can be partially rescued by increasing primase concentration." evidence="7">
    <original>H</original>
    <variation>A</variation>
    <location>
        <position position="324"/>
    </location>
</feature>
<feature type="helix" evidence="33">
    <location>
        <begin position="6"/>
        <end position="8"/>
    </location>
</feature>
<feature type="helix" evidence="33">
    <location>
        <begin position="9"/>
        <end position="19"/>
    </location>
</feature>
<feature type="helix" evidence="33">
    <location>
        <begin position="23"/>
        <end position="31"/>
    </location>
</feature>
<feature type="helix" evidence="33">
    <location>
        <begin position="32"/>
        <end position="34"/>
    </location>
</feature>
<feature type="turn" evidence="33">
    <location>
        <begin position="37"/>
        <end position="42"/>
    </location>
</feature>
<feature type="strand" evidence="33">
    <location>
        <begin position="43"/>
        <end position="48"/>
    </location>
</feature>
<feature type="helix" evidence="33">
    <location>
        <begin position="50"/>
        <end position="52"/>
    </location>
</feature>
<feature type="strand" evidence="33">
    <location>
        <begin position="54"/>
        <end position="58"/>
    </location>
</feature>
<feature type="helix" evidence="33">
    <location>
        <begin position="63"/>
        <end position="73"/>
    </location>
</feature>
<feature type="strand" evidence="33">
    <location>
        <begin position="76"/>
        <end position="86"/>
    </location>
</feature>
<feature type="helix" evidence="33">
    <location>
        <begin position="88"/>
        <end position="93"/>
    </location>
</feature>
<feature type="turn" evidence="30">
    <location>
        <begin position="96"/>
        <end position="98"/>
    </location>
</feature>
<feature type="strand" evidence="33">
    <location>
        <begin position="101"/>
        <end position="103"/>
    </location>
</feature>
<feature type="strand" evidence="33">
    <location>
        <begin position="106"/>
        <end position="111"/>
    </location>
</feature>
<feature type="helix" evidence="33">
    <location>
        <begin position="112"/>
        <end position="118"/>
    </location>
</feature>
<feature type="strand" evidence="33">
    <location>
        <begin position="120"/>
        <end position="122"/>
    </location>
</feature>
<feature type="turn" evidence="33">
    <location>
        <begin position="129"/>
        <end position="131"/>
    </location>
</feature>
<feature type="helix" evidence="33">
    <location>
        <begin position="132"/>
        <end position="148"/>
    </location>
</feature>
<feature type="strand" evidence="33">
    <location>
        <begin position="155"/>
        <end position="159"/>
    </location>
</feature>
<feature type="strand" evidence="33">
    <location>
        <begin position="161"/>
        <end position="169"/>
    </location>
</feature>
<feature type="helix" evidence="33">
    <location>
        <begin position="172"/>
        <end position="175"/>
    </location>
</feature>
<feature type="helix" evidence="33">
    <location>
        <begin position="179"/>
        <end position="189"/>
    </location>
</feature>
<feature type="helix" evidence="33">
    <location>
        <begin position="210"/>
        <end position="227"/>
    </location>
</feature>
<feature type="turn" evidence="33">
    <location>
        <begin position="228"/>
        <end position="230"/>
    </location>
</feature>
<feature type="helix" evidence="33">
    <location>
        <begin position="237"/>
        <end position="244"/>
    </location>
</feature>
<feature type="helix" evidence="33">
    <location>
        <begin position="249"/>
        <end position="251"/>
    </location>
</feature>
<feature type="helix" evidence="33">
    <location>
        <begin position="252"/>
        <end position="261"/>
    </location>
</feature>
<feature type="strand" evidence="32">
    <location>
        <begin position="262"/>
        <end position="264"/>
    </location>
</feature>
<feature type="helix" evidence="33">
    <location>
        <begin position="265"/>
        <end position="277"/>
    </location>
</feature>
<feature type="strand" evidence="33">
    <location>
        <begin position="281"/>
        <end position="285"/>
    </location>
</feature>
<feature type="helix" evidence="33">
    <location>
        <begin position="291"/>
        <end position="301"/>
    </location>
</feature>
<feature type="helix" evidence="33">
    <location>
        <begin position="307"/>
        <end position="311"/>
    </location>
</feature>
<feature type="turn" evidence="33">
    <location>
        <begin position="325"/>
        <end position="327"/>
    </location>
</feature>
<feature type="helix" evidence="33">
    <location>
        <begin position="336"/>
        <end position="341"/>
    </location>
</feature>
<feature type="helix" evidence="33">
    <location>
        <begin position="344"/>
        <end position="346"/>
    </location>
</feature>
<feature type="helix" evidence="33">
    <location>
        <begin position="350"/>
        <end position="357"/>
    </location>
</feature>
<feature type="strand" evidence="31">
    <location>
        <begin position="380"/>
        <end position="382"/>
    </location>
</feature>
<feature type="helix" evidence="33">
    <location>
        <begin position="383"/>
        <end position="385"/>
    </location>
</feature>
<feature type="helix" evidence="33">
    <location>
        <begin position="389"/>
        <end position="404"/>
    </location>
</feature>